<organism>
    <name type="scientific">Streptococcus pneumoniae serotype 2 (strain D39 / NCTC 7466)</name>
    <dbReference type="NCBI Taxonomy" id="373153"/>
    <lineage>
        <taxon>Bacteria</taxon>
        <taxon>Bacillati</taxon>
        <taxon>Bacillota</taxon>
        <taxon>Bacilli</taxon>
        <taxon>Lactobacillales</taxon>
        <taxon>Streptococcaceae</taxon>
        <taxon>Streptococcus</taxon>
    </lineage>
</organism>
<dbReference type="EC" id="3.1.26.3" evidence="1"/>
<dbReference type="EMBL" id="CP000410">
    <property type="protein sequence ID" value="ABJ55368.1"/>
    <property type="molecule type" value="Genomic_DNA"/>
</dbReference>
<dbReference type="RefSeq" id="WP_000661507.1">
    <property type="nucleotide sequence ID" value="NZ_JAMLJR010000006.1"/>
</dbReference>
<dbReference type="SMR" id="Q04K72"/>
<dbReference type="PaxDb" id="373153-SPD_1105"/>
<dbReference type="KEGG" id="spd:SPD_1105"/>
<dbReference type="eggNOG" id="COG0571">
    <property type="taxonomic scope" value="Bacteria"/>
</dbReference>
<dbReference type="HOGENOM" id="CLU_000907_1_3_9"/>
<dbReference type="BioCyc" id="SPNE373153:G1G6V-1196-MONOMER"/>
<dbReference type="Proteomes" id="UP000001452">
    <property type="component" value="Chromosome"/>
</dbReference>
<dbReference type="GO" id="GO:0005737">
    <property type="term" value="C:cytoplasm"/>
    <property type="evidence" value="ECO:0007669"/>
    <property type="project" value="UniProtKB-SubCell"/>
</dbReference>
<dbReference type="GO" id="GO:0003725">
    <property type="term" value="F:double-stranded RNA binding"/>
    <property type="evidence" value="ECO:0007669"/>
    <property type="project" value="TreeGrafter"/>
</dbReference>
<dbReference type="GO" id="GO:0046872">
    <property type="term" value="F:metal ion binding"/>
    <property type="evidence" value="ECO:0007669"/>
    <property type="project" value="UniProtKB-KW"/>
</dbReference>
<dbReference type="GO" id="GO:0004525">
    <property type="term" value="F:ribonuclease III activity"/>
    <property type="evidence" value="ECO:0007669"/>
    <property type="project" value="UniProtKB-UniRule"/>
</dbReference>
<dbReference type="GO" id="GO:0019843">
    <property type="term" value="F:rRNA binding"/>
    <property type="evidence" value="ECO:0007669"/>
    <property type="project" value="UniProtKB-KW"/>
</dbReference>
<dbReference type="GO" id="GO:0006397">
    <property type="term" value="P:mRNA processing"/>
    <property type="evidence" value="ECO:0007669"/>
    <property type="project" value="UniProtKB-UniRule"/>
</dbReference>
<dbReference type="GO" id="GO:0010468">
    <property type="term" value="P:regulation of gene expression"/>
    <property type="evidence" value="ECO:0007669"/>
    <property type="project" value="TreeGrafter"/>
</dbReference>
<dbReference type="GO" id="GO:0006364">
    <property type="term" value="P:rRNA processing"/>
    <property type="evidence" value="ECO:0007669"/>
    <property type="project" value="UniProtKB-UniRule"/>
</dbReference>
<dbReference type="GO" id="GO:0008033">
    <property type="term" value="P:tRNA processing"/>
    <property type="evidence" value="ECO:0007669"/>
    <property type="project" value="UniProtKB-KW"/>
</dbReference>
<dbReference type="CDD" id="cd10845">
    <property type="entry name" value="DSRM_RNAse_III_family"/>
    <property type="match status" value="1"/>
</dbReference>
<dbReference type="CDD" id="cd00593">
    <property type="entry name" value="RIBOc"/>
    <property type="match status" value="1"/>
</dbReference>
<dbReference type="FunFam" id="1.10.1520.10:FF:000001">
    <property type="entry name" value="Ribonuclease 3"/>
    <property type="match status" value="1"/>
</dbReference>
<dbReference type="FunFam" id="3.30.160.20:FF:000003">
    <property type="entry name" value="Ribonuclease 3"/>
    <property type="match status" value="1"/>
</dbReference>
<dbReference type="Gene3D" id="3.30.160.20">
    <property type="match status" value="1"/>
</dbReference>
<dbReference type="Gene3D" id="1.10.1520.10">
    <property type="entry name" value="Ribonuclease III domain"/>
    <property type="match status" value="1"/>
</dbReference>
<dbReference type="HAMAP" id="MF_00104">
    <property type="entry name" value="RNase_III"/>
    <property type="match status" value="1"/>
</dbReference>
<dbReference type="InterPro" id="IPR014720">
    <property type="entry name" value="dsRBD_dom"/>
</dbReference>
<dbReference type="InterPro" id="IPR011907">
    <property type="entry name" value="RNase_III"/>
</dbReference>
<dbReference type="InterPro" id="IPR000999">
    <property type="entry name" value="RNase_III_dom"/>
</dbReference>
<dbReference type="InterPro" id="IPR036389">
    <property type="entry name" value="RNase_III_sf"/>
</dbReference>
<dbReference type="NCBIfam" id="TIGR02191">
    <property type="entry name" value="RNaseIII"/>
    <property type="match status" value="1"/>
</dbReference>
<dbReference type="PANTHER" id="PTHR11207:SF0">
    <property type="entry name" value="RIBONUCLEASE 3"/>
    <property type="match status" value="1"/>
</dbReference>
<dbReference type="PANTHER" id="PTHR11207">
    <property type="entry name" value="RIBONUCLEASE III"/>
    <property type="match status" value="1"/>
</dbReference>
<dbReference type="Pfam" id="PF00035">
    <property type="entry name" value="dsrm"/>
    <property type="match status" value="1"/>
</dbReference>
<dbReference type="Pfam" id="PF14622">
    <property type="entry name" value="Ribonucleas_3_3"/>
    <property type="match status" value="1"/>
</dbReference>
<dbReference type="SMART" id="SM00358">
    <property type="entry name" value="DSRM"/>
    <property type="match status" value="1"/>
</dbReference>
<dbReference type="SMART" id="SM00535">
    <property type="entry name" value="RIBOc"/>
    <property type="match status" value="1"/>
</dbReference>
<dbReference type="SUPFAM" id="SSF54768">
    <property type="entry name" value="dsRNA-binding domain-like"/>
    <property type="match status" value="1"/>
</dbReference>
<dbReference type="SUPFAM" id="SSF69065">
    <property type="entry name" value="RNase III domain-like"/>
    <property type="match status" value="1"/>
</dbReference>
<dbReference type="PROSITE" id="PS50137">
    <property type="entry name" value="DS_RBD"/>
    <property type="match status" value="1"/>
</dbReference>
<dbReference type="PROSITE" id="PS00517">
    <property type="entry name" value="RNASE_3_1"/>
    <property type="match status" value="1"/>
</dbReference>
<dbReference type="PROSITE" id="PS50142">
    <property type="entry name" value="RNASE_3_2"/>
    <property type="match status" value="1"/>
</dbReference>
<keyword id="KW-0963">Cytoplasm</keyword>
<keyword id="KW-0255">Endonuclease</keyword>
<keyword id="KW-0378">Hydrolase</keyword>
<keyword id="KW-0460">Magnesium</keyword>
<keyword id="KW-0479">Metal-binding</keyword>
<keyword id="KW-0507">mRNA processing</keyword>
<keyword id="KW-0540">Nuclease</keyword>
<keyword id="KW-1185">Reference proteome</keyword>
<keyword id="KW-0694">RNA-binding</keyword>
<keyword id="KW-0698">rRNA processing</keyword>
<keyword id="KW-0699">rRNA-binding</keyword>
<keyword id="KW-0819">tRNA processing</keyword>
<comment type="function">
    <text evidence="1">Digests double-stranded RNA. Involved in the processing of primary rRNA transcript to yield the immediate precursors to the large and small rRNAs (23S and 16S). Processes some mRNAs, and tRNAs when they are encoded in the rRNA operon. Processes pre-crRNA and tracrRNA of type II CRISPR loci if present in the organism.</text>
</comment>
<comment type="catalytic activity">
    <reaction evidence="1">
        <text>Endonucleolytic cleavage to 5'-phosphomonoester.</text>
        <dbReference type="EC" id="3.1.26.3"/>
    </reaction>
</comment>
<comment type="cofactor">
    <cofactor evidence="1">
        <name>Mg(2+)</name>
        <dbReference type="ChEBI" id="CHEBI:18420"/>
    </cofactor>
</comment>
<comment type="subunit">
    <text evidence="1">Homodimer.</text>
</comment>
<comment type="subcellular location">
    <subcellularLocation>
        <location evidence="1">Cytoplasm</location>
    </subcellularLocation>
</comment>
<comment type="similarity">
    <text evidence="1">Belongs to the ribonuclease III family.</text>
</comment>
<accession>Q04K72</accession>
<feature type="chain" id="PRO_1000075834" description="Ribonuclease 3">
    <location>
        <begin position="1"/>
        <end position="232"/>
    </location>
</feature>
<feature type="domain" description="RNase III" evidence="1">
    <location>
        <begin position="5"/>
        <end position="134"/>
    </location>
</feature>
<feature type="domain" description="DRBM" evidence="1">
    <location>
        <begin position="160"/>
        <end position="229"/>
    </location>
</feature>
<feature type="active site" evidence="1">
    <location>
        <position position="51"/>
    </location>
</feature>
<feature type="active site" evidence="1">
    <location>
        <position position="123"/>
    </location>
</feature>
<feature type="binding site" evidence="1">
    <location>
        <position position="47"/>
    </location>
    <ligand>
        <name>Mg(2+)</name>
        <dbReference type="ChEBI" id="CHEBI:18420"/>
    </ligand>
</feature>
<feature type="binding site" evidence="1">
    <location>
        <position position="120"/>
    </location>
    <ligand>
        <name>Mg(2+)</name>
        <dbReference type="ChEBI" id="CHEBI:18420"/>
    </ligand>
</feature>
<feature type="binding site" evidence="1">
    <location>
        <position position="123"/>
    </location>
    <ligand>
        <name>Mg(2+)</name>
        <dbReference type="ChEBI" id="CHEBI:18420"/>
    </ligand>
</feature>
<proteinExistence type="inferred from homology"/>
<reference key="1">
    <citation type="journal article" date="2007" name="J. Bacteriol.">
        <title>Genome sequence of Avery's virulent serotype 2 strain D39 of Streptococcus pneumoniae and comparison with that of unencapsulated laboratory strain R6.</title>
        <authorList>
            <person name="Lanie J.A."/>
            <person name="Ng W.-L."/>
            <person name="Kazmierczak K.M."/>
            <person name="Andrzejewski T.M."/>
            <person name="Davidsen T.M."/>
            <person name="Wayne K.J."/>
            <person name="Tettelin H."/>
            <person name="Glass J.I."/>
            <person name="Winkler M.E."/>
        </authorList>
    </citation>
    <scope>NUCLEOTIDE SEQUENCE [LARGE SCALE GENOMIC DNA]</scope>
    <source>
        <strain>D39 / NCTC 7466</strain>
    </source>
</reference>
<gene>
    <name evidence="1" type="primary">rnc</name>
    <name type="ordered locus">SPD_1105</name>
</gene>
<sequence length="232" mass="26226">MKELQTVLKNHFEIEFADKKLLETAFTHTSYANEHRLLKISHNERLEFLGDAVLQLLISEYLYKKYPKKPEGDLSKLRAMIVREESLAGFARDCQFDQFIKLGKGEEKSGGRNRDTILGDAFEAFLGALLLDKDVAKVKEFIYQVMIPKVEAGEFEMITDYKTHLQELLQVNGDVAIRYQVISETGPAHDKVFDVEVLVEGKSIGQGQGRSKKLAEQEAAKNAVEKGLDSCI</sequence>
<name>RNC_STRP2</name>
<protein>
    <recommendedName>
        <fullName evidence="1">Ribonuclease 3</fullName>
        <ecNumber evidence="1">3.1.26.3</ecNumber>
    </recommendedName>
    <alternativeName>
        <fullName evidence="1">Ribonuclease III</fullName>
        <shortName evidence="1">RNase III</shortName>
    </alternativeName>
</protein>
<evidence type="ECO:0000255" key="1">
    <source>
        <dbReference type="HAMAP-Rule" id="MF_00104"/>
    </source>
</evidence>